<sequence>MHRFLFALDPEAAHGLALGLLALWSERGPLLEVPARLLRVEDPRLRVEAFGVSFPNPLGLAAGMDKDARALGAWWALGFGFAEVGTLTPRPQVGNPKPRLFRLVEDRALINRMGFNNRGAEEAARRLKRSRQRGLPLPIGVNLGKNRDTPLGRAAEDYLKALRLLEPFGDYFVLNVSSPNTPGLRALQEGPFLDELLARLRPATKKPLLLKVAPDLSPKALDEVLALAKKHRLQGLVAVNTTLAREGLKSPWAKEAGGLSGRPLKGRALEVLRHLAEGAEGLALVSVGGVETPLDLWERLKAGASLVQVYTGFVYGGPLFPRRLLLGLLRLMEAEGVSSLGELRRA</sequence>
<keyword id="KW-1003">Cell membrane</keyword>
<keyword id="KW-0285">Flavoprotein</keyword>
<keyword id="KW-0288">FMN</keyword>
<keyword id="KW-0472">Membrane</keyword>
<keyword id="KW-0560">Oxidoreductase</keyword>
<keyword id="KW-0665">Pyrimidine biosynthesis</keyword>
<keyword id="KW-1185">Reference proteome</keyword>
<dbReference type="EC" id="1.3.5.2" evidence="1"/>
<dbReference type="EMBL" id="AP008226">
    <property type="protein sequence ID" value="BAD70602.1"/>
    <property type="molecule type" value="Genomic_DNA"/>
</dbReference>
<dbReference type="RefSeq" id="WP_011228193.1">
    <property type="nucleotide sequence ID" value="NC_006461.1"/>
</dbReference>
<dbReference type="RefSeq" id="YP_144045.1">
    <property type="nucleotide sequence ID" value="NC_006461.1"/>
</dbReference>
<dbReference type="SMR" id="Q5SK69"/>
<dbReference type="EnsemblBacteria" id="BAD70602">
    <property type="protein sequence ID" value="BAD70602"/>
    <property type="gene ID" value="BAD70602"/>
</dbReference>
<dbReference type="GeneID" id="3169181"/>
<dbReference type="KEGG" id="ttj:TTHA0779"/>
<dbReference type="PATRIC" id="fig|300852.9.peg.772"/>
<dbReference type="eggNOG" id="COG0167">
    <property type="taxonomic scope" value="Bacteria"/>
</dbReference>
<dbReference type="HOGENOM" id="CLU_013640_2_0_0"/>
<dbReference type="PhylomeDB" id="Q5SK69"/>
<dbReference type="UniPathway" id="UPA00070">
    <property type="reaction ID" value="UER00946"/>
</dbReference>
<dbReference type="Proteomes" id="UP000000532">
    <property type="component" value="Chromosome"/>
</dbReference>
<dbReference type="GO" id="GO:0005737">
    <property type="term" value="C:cytoplasm"/>
    <property type="evidence" value="ECO:0007669"/>
    <property type="project" value="InterPro"/>
</dbReference>
<dbReference type="GO" id="GO:0005886">
    <property type="term" value="C:plasma membrane"/>
    <property type="evidence" value="ECO:0007669"/>
    <property type="project" value="UniProtKB-SubCell"/>
</dbReference>
<dbReference type="GO" id="GO:0106430">
    <property type="term" value="F:dihydroorotate dehydrogenase (quinone) activity"/>
    <property type="evidence" value="ECO:0007669"/>
    <property type="project" value="UniProtKB-EC"/>
</dbReference>
<dbReference type="GO" id="GO:0006207">
    <property type="term" value="P:'de novo' pyrimidine nucleobase biosynthetic process"/>
    <property type="evidence" value="ECO:0007669"/>
    <property type="project" value="InterPro"/>
</dbReference>
<dbReference type="GO" id="GO:0044205">
    <property type="term" value="P:'de novo' UMP biosynthetic process"/>
    <property type="evidence" value="ECO:0007669"/>
    <property type="project" value="UniProtKB-UniRule"/>
</dbReference>
<dbReference type="CDD" id="cd04738">
    <property type="entry name" value="DHOD_2_like"/>
    <property type="match status" value="1"/>
</dbReference>
<dbReference type="Gene3D" id="3.20.20.70">
    <property type="entry name" value="Aldolase class I"/>
    <property type="match status" value="1"/>
</dbReference>
<dbReference type="HAMAP" id="MF_00225">
    <property type="entry name" value="DHO_dh_type2"/>
    <property type="match status" value="1"/>
</dbReference>
<dbReference type="InterPro" id="IPR013785">
    <property type="entry name" value="Aldolase_TIM"/>
</dbReference>
<dbReference type="InterPro" id="IPR050074">
    <property type="entry name" value="DHO_dehydrogenase"/>
</dbReference>
<dbReference type="InterPro" id="IPR012135">
    <property type="entry name" value="Dihydroorotate_DH_1_2"/>
</dbReference>
<dbReference type="InterPro" id="IPR005719">
    <property type="entry name" value="Dihydroorotate_DH_2"/>
</dbReference>
<dbReference type="InterPro" id="IPR005720">
    <property type="entry name" value="Dihydroorotate_DH_cat"/>
</dbReference>
<dbReference type="InterPro" id="IPR001295">
    <property type="entry name" value="Dihydroorotate_DH_CS"/>
</dbReference>
<dbReference type="NCBIfam" id="NF003645">
    <property type="entry name" value="PRK05286.1-2"/>
    <property type="match status" value="1"/>
</dbReference>
<dbReference type="NCBIfam" id="NF003652">
    <property type="entry name" value="PRK05286.2-5"/>
    <property type="match status" value="1"/>
</dbReference>
<dbReference type="NCBIfam" id="TIGR01036">
    <property type="entry name" value="pyrD_sub2"/>
    <property type="match status" value="1"/>
</dbReference>
<dbReference type="PANTHER" id="PTHR48109:SF4">
    <property type="entry name" value="DIHYDROOROTATE DEHYDROGENASE (QUINONE), MITOCHONDRIAL"/>
    <property type="match status" value="1"/>
</dbReference>
<dbReference type="PANTHER" id="PTHR48109">
    <property type="entry name" value="DIHYDROOROTATE DEHYDROGENASE (QUINONE), MITOCHONDRIAL-RELATED"/>
    <property type="match status" value="1"/>
</dbReference>
<dbReference type="Pfam" id="PF01180">
    <property type="entry name" value="DHO_dh"/>
    <property type="match status" value="1"/>
</dbReference>
<dbReference type="PIRSF" id="PIRSF000164">
    <property type="entry name" value="DHO_oxidase"/>
    <property type="match status" value="1"/>
</dbReference>
<dbReference type="SUPFAM" id="SSF51395">
    <property type="entry name" value="FMN-linked oxidoreductases"/>
    <property type="match status" value="1"/>
</dbReference>
<dbReference type="PROSITE" id="PS00911">
    <property type="entry name" value="DHODEHASE_1"/>
    <property type="match status" value="1"/>
</dbReference>
<protein>
    <recommendedName>
        <fullName evidence="1">Dihydroorotate dehydrogenase (quinone)</fullName>
        <ecNumber evidence="1">1.3.5.2</ecNumber>
    </recommendedName>
    <alternativeName>
        <fullName evidence="1">DHOdehase</fullName>
        <shortName evidence="1">DHOD</shortName>
        <shortName evidence="1">DHODase</shortName>
    </alternativeName>
    <alternativeName>
        <fullName evidence="1">Dihydroorotate oxidase</fullName>
    </alternativeName>
</protein>
<feature type="chain" id="PRO_0000148483" description="Dihydroorotate dehydrogenase (quinone)">
    <location>
        <begin position="1"/>
        <end position="346"/>
    </location>
</feature>
<feature type="active site" description="Nucleophile" evidence="1">
    <location>
        <position position="178"/>
    </location>
</feature>
<feature type="binding site" evidence="1">
    <location>
        <begin position="62"/>
        <end position="66"/>
    </location>
    <ligand>
        <name>FMN</name>
        <dbReference type="ChEBI" id="CHEBI:58210"/>
    </ligand>
</feature>
<feature type="binding site" evidence="1">
    <location>
        <position position="66"/>
    </location>
    <ligand>
        <name>substrate</name>
    </ligand>
</feature>
<feature type="binding site" evidence="1">
    <location>
        <position position="86"/>
    </location>
    <ligand>
        <name>FMN</name>
        <dbReference type="ChEBI" id="CHEBI:58210"/>
    </ligand>
</feature>
<feature type="binding site" evidence="1">
    <location>
        <begin position="111"/>
        <end position="115"/>
    </location>
    <ligand>
        <name>substrate</name>
    </ligand>
</feature>
<feature type="binding site" evidence="1">
    <location>
        <position position="142"/>
    </location>
    <ligand>
        <name>FMN</name>
        <dbReference type="ChEBI" id="CHEBI:58210"/>
    </ligand>
</feature>
<feature type="binding site" evidence="1">
    <location>
        <position position="175"/>
    </location>
    <ligand>
        <name>FMN</name>
        <dbReference type="ChEBI" id="CHEBI:58210"/>
    </ligand>
</feature>
<feature type="binding site" evidence="1">
    <location>
        <position position="175"/>
    </location>
    <ligand>
        <name>substrate</name>
    </ligand>
</feature>
<feature type="binding site" evidence="1">
    <location>
        <position position="180"/>
    </location>
    <ligand>
        <name>substrate</name>
    </ligand>
</feature>
<feature type="binding site" evidence="1">
    <location>
        <position position="211"/>
    </location>
    <ligand>
        <name>FMN</name>
        <dbReference type="ChEBI" id="CHEBI:58210"/>
    </ligand>
</feature>
<feature type="binding site" evidence="1">
    <location>
        <position position="239"/>
    </location>
    <ligand>
        <name>FMN</name>
        <dbReference type="ChEBI" id="CHEBI:58210"/>
    </ligand>
</feature>
<feature type="binding site" evidence="1">
    <location>
        <begin position="240"/>
        <end position="241"/>
    </location>
    <ligand>
        <name>substrate</name>
    </ligand>
</feature>
<feature type="binding site" evidence="1">
    <location>
        <position position="261"/>
    </location>
    <ligand>
        <name>FMN</name>
        <dbReference type="ChEBI" id="CHEBI:58210"/>
    </ligand>
</feature>
<feature type="binding site" evidence="1">
    <location>
        <position position="289"/>
    </location>
    <ligand>
        <name>FMN</name>
        <dbReference type="ChEBI" id="CHEBI:58210"/>
    </ligand>
</feature>
<feature type="binding site" evidence="1">
    <location>
        <begin position="310"/>
        <end position="311"/>
    </location>
    <ligand>
        <name>FMN</name>
        <dbReference type="ChEBI" id="CHEBI:58210"/>
    </ligand>
</feature>
<evidence type="ECO:0000255" key="1">
    <source>
        <dbReference type="HAMAP-Rule" id="MF_00225"/>
    </source>
</evidence>
<accession>Q5SK69</accession>
<proteinExistence type="inferred from homology"/>
<comment type="function">
    <text evidence="1">Catalyzes the conversion of dihydroorotate to orotate with quinone as electron acceptor.</text>
</comment>
<comment type="catalytic activity">
    <reaction evidence="1">
        <text>(S)-dihydroorotate + a quinone = orotate + a quinol</text>
        <dbReference type="Rhea" id="RHEA:30187"/>
        <dbReference type="ChEBI" id="CHEBI:24646"/>
        <dbReference type="ChEBI" id="CHEBI:30839"/>
        <dbReference type="ChEBI" id="CHEBI:30864"/>
        <dbReference type="ChEBI" id="CHEBI:132124"/>
        <dbReference type="EC" id="1.3.5.2"/>
    </reaction>
</comment>
<comment type="cofactor">
    <cofactor evidence="1">
        <name>FMN</name>
        <dbReference type="ChEBI" id="CHEBI:58210"/>
    </cofactor>
    <text evidence="1">Binds 1 FMN per subunit.</text>
</comment>
<comment type="pathway">
    <text evidence="1">Pyrimidine metabolism; UMP biosynthesis via de novo pathway; orotate from (S)-dihydroorotate (quinone route): step 1/1.</text>
</comment>
<comment type="subunit">
    <text evidence="1">Monomer.</text>
</comment>
<comment type="subcellular location">
    <subcellularLocation>
        <location evidence="1">Cell membrane</location>
        <topology evidence="1">Peripheral membrane protein</topology>
    </subcellularLocation>
</comment>
<comment type="similarity">
    <text evidence="1">Belongs to the dihydroorotate dehydrogenase family. Type 2 subfamily.</text>
</comment>
<name>PYRD_THET8</name>
<organism>
    <name type="scientific">Thermus thermophilus (strain ATCC 27634 / DSM 579 / HB8)</name>
    <dbReference type="NCBI Taxonomy" id="300852"/>
    <lineage>
        <taxon>Bacteria</taxon>
        <taxon>Thermotogati</taxon>
        <taxon>Deinococcota</taxon>
        <taxon>Deinococci</taxon>
        <taxon>Thermales</taxon>
        <taxon>Thermaceae</taxon>
        <taxon>Thermus</taxon>
    </lineage>
</organism>
<reference key="1">
    <citation type="submission" date="2004-11" db="EMBL/GenBank/DDBJ databases">
        <title>Complete genome sequence of Thermus thermophilus HB8.</title>
        <authorList>
            <person name="Masui R."/>
            <person name="Kurokawa K."/>
            <person name="Nakagawa N."/>
            <person name="Tokunaga F."/>
            <person name="Koyama Y."/>
            <person name="Shibata T."/>
            <person name="Oshima T."/>
            <person name="Yokoyama S."/>
            <person name="Yasunaga T."/>
            <person name="Kuramitsu S."/>
        </authorList>
    </citation>
    <scope>NUCLEOTIDE SEQUENCE [LARGE SCALE GENOMIC DNA]</scope>
    <source>
        <strain>ATCC 27634 / DSM 579 / HB8</strain>
    </source>
</reference>
<gene>
    <name evidence="1" type="primary">pyrD</name>
    <name type="ordered locus">TTHA0779</name>
</gene>